<comment type="function">
    <text evidence="1">Involved in the gluconeogenesis. Catalyzes stereospecifically the conversion of dihydroxyacetone phosphate (DHAP) to D-glyceraldehyde-3-phosphate (G3P).</text>
</comment>
<comment type="catalytic activity">
    <reaction evidence="1">
        <text>D-glyceraldehyde 3-phosphate = dihydroxyacetone phosphate</text>
        <dbReference type="Rhea" id="RHEA:18585"/>
        <dbReference type="ChEBI" id="CHEBI:57642"/>
        <dbReference type="ChEBI" id="CHEBI:59776"/>
        <dbReference type="EC" id="5.3.1.1"/>
    </reaction>
</comment>
<comment type="pathway">
    <text evidence="1">Carbohydrate biosynthesis; gluconeogenesis.</text>
</comment>
<comment type="pathway">
    <text evidence="1">Carbohydrate degradation; glycolysis; D-glyceraldehyde 3-phosphate from glycerone phosphate: step 1/1.</text>
</comment>
<comment type="subunit">
    <text evidence="1">Homodimer.</text>
</comment>
<comment type="subcellular location">
    <subcellularLocation>
        <location evidence="1">Cytoplasm</location>
    </subcellularLocation>
</comment>
<comment type="similarity">
    <text evidence="1">Belongs to the triosephosphate isomerase family.</text>
</comment>
<feature type="chain" id="PRO_1000096497" description="Triosephosphate isomerase">
    <location>
        <begin position="1"/>
        <end position="255"/>
    </location>
</feature>
<feature type="active site" description="Electrophile" evidence="1">
    <location>
        <position position="95"/>
    </location>
</feature>
<feature type="active site" description="Proton acceptor" evidence="1">
    <location>
        <position position="167"/>
    </location>
</feature>
<feature type="binding site" evidence="1">
    <location>
        <begin position="9"/>
        <end position="11"/>
    </location>
    <ligand>
        <name>substrate</name>
    </ligand>
</feature>
<feature type="binding site" evidence="1">
    <location>
        <position position="173"/>
    </location>
    <ligand>
        <name>substrate</name>
    </ligand>
</feature>
<feature type="binding site" evidence="1">
    <location>
        <position position="212"/>
    </location>
    <ligand>
        <name>substrate</name>
    </ligand>
</feature>
<feature type="binding site" evidence="1">
    <location>
        <begin position="233"/>
        <end position="234"/>
    </location>
    <ligand>
        <name>substrate</name>
    </ligand>
</feature>
<reference key="1">
    <citation type="journal article" date="2008" name="Environ. Microbiol.">
        <title>The genome of Erwinia tasmaniensis strain Et1/99, a non-pathogenic bacterium in the genus Erwinia.</title>
        <authorList>
            <person name="Kube M."/>
            <person name="Migdoll A.M."/>
            <person name="Mueller I."/>
            <person name="Kuhl H."/>
            <person name="Beck A."/>
            <person name="Reinhardt R."/>
            <person name="Geider K."/>
        </authorList>
    </citation>
    <scope>NUCLEOTIDE SEQUENCE [LARGE SCALE GENOMIC DNA]</scope>
    <source>
        <strain>DSM 17950 / CFBP 7177 / CIP 109463 / NCPPB 4357 / Et1/99</strain>
    </source>
</reference>
<accession>B2VF53</accession>
<evidence type="ECO:0000255" key="1">
    <source>
        <dbReference type="HAMAP-Rule" id="MF_00147"/>
    </source>
</evidence>
<protein>
    <recommendedName>
        <fullName evidence="1">Triosephosphate isomerase</fullName>
        <shortName evidence="1">TIM</shortName>
        <shortName evidence="1">TPI</shortName>
        <ecNumber evidence="1">5.3.1.1</ecNumber>
    </recommendedName>
    <alternativeName>
        <fullName evidence="1">Triose-phosphate isomerase</fullName>
    </alternativeName>
</protein>
<dbReference type="EC" id="5.3.1.1" evidence="1"/>
<dbReference type="EMBL" id="CU468135">
    <property type="protein sequence ID" value="CAO95152.1"/>
    <property type="molecule type" value="Genomic_DNA"/>
</dbReference>
<dbReference type="RefSeq" id="WP_012439878.1">
    <property type="nucleotide sequence ID" value="NC_010694.1"/>
</dbReference>
<dbReference type="SMR" id="B2VF53"/>
<dbReference type="STRING" id="465817.ETA_01060"/>
<dbReference type="KEGG" id="eta:ETA_01060"/>
<dbReference type="eggNOG" id="COG0149">
    <property type="taxonomic scope" value="Bacteria"/>
</dbReference>
<dbReference type="HOGENOM" id="CLU_024251_2_1_6"/>
<dbReference type="OrthoDB" id="9809429at2"/>
<dbReference type="UniPathway" id="UPA00109">
    <property type="reaction ID" value="UER00189"/>
</dbReference>
<dbReference type="UniPathway" id="UPA00138"/>
<dbReference type="Proteomes" id="UP000001726">
    <property type="component" value="Chromosome"/>
</dbReference>
<dbReference type="GO" id="GO:0005829">
    <property type="term" value="C:cytosol"/>
    <property type="evidence" value="ECO:0007669"/>
    <property type="project" value="TreeGrafter"/>
</dbReference>
<dbReference type="GO" id="GO:0004807">
    <property type="term" value="F:triose-phosphate isomerase activity"/>
    <property type="evidence" value="ECO:0007669"/>
    <property type="project" value="UniProtKB-UniRule"/>
</dbReference>
<dbReference type="GO" id="GO:0006094">
    <property type="term" value="P:gluconeogenesis"/>
    <property type="evidence" value="ECO:0007669"/>
    <property type="project" value="UniProtKB-UniRule"/>
</dbReference>
<dbReference type="GO" id="GO:0046166">
    <property type="term" value="P:glyceraldehyde-3-phosphate biosynthetic process"/>
    <property type="evidence" value="ECO:0007669"/>
    <property type="project" value="TreeGrafter"/>
</dbReference>
<dbReference type="GO" id="GO:0019563">
    <property type="term" value="P:glycerol catabolic process"/>
    <property type="evidence" value="ECO:0007669"/>
    <property type="project" value="TreeGrafter"/>
</dbReference>
<dbReference type="GO" id="GO:0006096">
    <property type="term" value="P:glycolytic process"/>
    <property type="evidence" value="ECO:0007669"/>
    <property type="project" value="UniProtKB-UniRule"/>
</dbReference>
<dbReference type="CDD" id="cd00311">
    <property type="entry name" value="TIM"/>
    <property type="match status" value="1"/>
</dbReference>
<dbReference type="FunFam" id="3.20.20.70:FF:000020">
    <property type="entry name" value="Triosephosphate isomerase"/>
    <property type="match status" value="1"/>
</dbReference>
<dbReference type="Gene3D" id="3.20.20.70">
    <property type="entry name" value="Aldolase class I"/>
    <property type="match status" value="1"/>
</dbReference>
<dbReference type="HAMAP" id="MF_00147_B">
    <property type="entry name" value="TIM_B"/>
    <property type="match status" value="1"/>
</dbReference>
<dbReference type="InterPro" id="IPR013785">
    <property type="entry name" value="Aldolase_TIM"/>
</dbReference>
<dbReference type="InterPro" id="IPR035990">
    <property type="entry name" value="TIM_sf"/>
</dbReference>
<dbReference type="InterPro" id="IPR022896">
    <property type="entry name" value="TrioseP_Isoase_bac/euk"/>
</dbReference>
<dbReference type="InterPro" id="IPR000652">
    <property type="entry name" value="Triosephosphate_isomerase"/>
</dbReference>
<dbReference type="InterPro" id="IPR020861">
    <property type="entry name" value="Triosephosphate_isomerase_AS"/>
</dbReference>
<dbReference type="NCBIfam" id="TIGR00419">
    <property type="entry name" value="tim"/>
    <property type="match status" value="1"/>
</dbReference>
<dbReference type="PANTHER" id="PTHR21139">
    <property type="entry name" value="TRIOSEPHOSPHATE ISOMERASE"/>
    <property type="match status" value="1"/>
</dbReference>
<dbReference type="PANTHER" id="PTHR21139:SF42">
    <property type="entry name" value="TRIOSEPHOSPHATE ISOMERASE"/>
    <property type="match status" value="1"/>
</dbReference>
<dbReference type="Pfam" id="PF00121">
    <property type="entry name" value="TIM"/>
    <property type="match status" value="1"/>
</dbReference>
<dbReference type="SUPFAM" id="SSF51351">
    <property type="entry name" value="Triosephosphate isomerase (TIM)"/>
    <property type="match status" value="1"/>
</dbReference>
<dbReference type="PROSITE" id="PS00171">
    <property type="entry name" value="TIM_1"/>
    <property type="match status" value="1"/>
</dbReference>
<dbReference type="PROSITE" id="PS51440">
    <property type="entry name" value="TIM_2"/>
    <property type="match status" value="1"/>
</dbReference>
<keyword id="KW-0963">Cytoplasm</keyword>
<keyword id="KW-0312">Gluconeogenesis</keyword>
<keyword id="KW-0324">Glycolysis</keyword>
<keyword id="KW-0413">Isomerase</keyword>
<keyword id="KW-1185">Reference proteome</keyword>
<name>TPIS_ERWT9</name>
<organism>
    <name type="scientific">Erwinia tasmaniensis (strain DSM 17950 / CFBP 7177 / CIP 109463 / NCPPB 4357 / Et1/99)</name>
    <dbReference type="NCBI Taxonomy" id="465817"/>
    <lineage>
        <taxon>Bacteria</taxon>
        <taxon>Pseudomonadati</taxon>
        <taxon>Pseudomonadota</taxon>
        <taxon>Gammaproteobacteria</taxon>
        <taxon>Enterobacterales</taxon>
        <taxon>Erwiniaceae</taxon>
        <taxon>Erwinia</taxon>
    </lineage>
</organism>
<proteinExistence type="inferred from homology"/>
<gene>
    <name evidence="1" type="primary">tpiA</name>
    <name type="ordered locus">ETA_01060</name>
</gene>
<sequence length="255" mass="26610">MRHPLVMGNWKLNGNKQMVNELIAGLRTELSGVDGCGVAIAPPVMYLEQAKHAISGSPVALGAQNVDVNLSGAFTGEVSADMLKDIGAQYIIIGHSERRTWHAESDDAIAKKFAVLKQTGLIPVLCIGETEAENEAGKTEEVCARQIDAVLNTQGADAFKGVVIAYEPVWAIGTGKSATPAQAQAVHKFIRDHIAKKDATVAAQVIIQYGGSVNDKNAAELFAQPDIDGALVGGASLKADAFAAIVKAAAAAKKA</sequence>